<gene>
    <name type="primary">mauJ</name>
    <name type="synonym">madG</name>
</gene>
<dbReference type="EMBL" id="L36953">
    <property type="protein sequence ID" value="AAA85387.1"/>
    <property type="molecule type" value="mRNA"/>
</dbReference>
<dbReference type="EMBL" id="M58001">
    <property type="protein sequence ID" value="AAA50572.1"/>
    <property type="molecule type" value="Genomic_DNA"/>
</dbReference>
<dbReference type="PIR" id="S19733">
    <property type="entry name" value="S19733"/>
</dbReference>
<dbReference type="RefSeq" id="WP_036750414.1">
    <property type="nucleotide sequence ID" value="NZ_CP035286.1"/>
</dbReference>
<dbReference type="eggNOG" id="ENOG5032SZ3">
    <property type="taxonomic scope" value="Bacteria"/>
</dbReference>
<dbReference type="OrthoDB" id="7932535at2"/>
<dbReference type="UniPathway" id="UPA00895"/>
<dbReference type="InterPro" id="IPR035383">
    <property type="entry name" value="MauJ"/>
</dbReference>
<dbReference type="Pfam" id="PF17419">
    <property type="entry name" value="MauJ"/>
    <property type="match status" value="1"/>
</dbReference>
<sequence length="292" mass="31339">MWIPYDLRASLKGETDRETLRLSRADGQPRQFLVGFFLRNPVTQAWELDLAAEDGLPELPAVPAGASFSICPNEAGKLAEVIYRLPARSATEALELAHADLQPRLLAWLARVGRGMAIAGWRVADMTHRARWRSTPFRPSAMSLDFALAPVDRDLAPVVELFQRARNAPDPASRLLAAFAVLSAAVGHPAMAGSGAATLSITQDMLIHSGAIVLPDPLMGIALADLIALLRPEHDRLVGRDGVLLPVLDDLAGQKRLSLLANLADLVAHRLIQAELAARHRDAPAPAMAAGA</sequence>
<organism>
    <name type="scientific">Paracoccus versutus</name>
    <name type="common">Thiobacillus versutus</name>
    <dbReference type="NCBI Taxonomy" id="34007"/>
    <lineage>
        <taxon>Bacteria</taxon>
        <taxon>Pseudomonadati</taxon>
        <taxon>Pseudomonadota</taxon>
        <taxon>Alphaproteobacteria</taxon>
        <taxon>Rhodobacterales</taxon>
        <taxon>Paracoccaceae</taxon>
        <taxon>Paracoccus</taxon>
    </lineage>
</organism>
<proteinExistence type="evidence at transcript level"/>
<accession>Q56464</accession>
<accession>Q56459</accession>
<comment type="pathway">
    <text>One-carbon metabolism; methylamine degradation.</text>
</comment>
<protein>
    <recommendedName>
        <fullName>Methylamine utilization protein MauJ</fullName>
    </recommendedName>
</protein>
<feature type="chain" id="PRO_0000208944" description="Methylamine utilization protein MauJ">
    <location>
        <begin position="1"/>
        <end position="292"/>
    </location>
</feature>
<reference key="1">
    <citation type="submission" date="1996-01" db="EMBL/GenBank/DDBJ databases">
        <authorList>
            <person name="Huitema F."/>
            <person name="Duine J.A."/>
            <person name="Canters G.W."/>
        </authorList>
    </citation>
    <scope>NUCLEOTIDE SEQUENCE [GENOMIC DNA]</scope>
</reference>
<reference key="2">
    <citation type="journal article" date="1991" name="Eur. J. Biochem.">
        <title>Cloning, sequencing and expression studies of the genes encoding amicyanin and the beta-subunit of methylamine dehydrogenase from Thiobacillus versutus.</title>
        <authorList>
            <person name="Ubbink M."/>
            <person name="van Kleef M.A."/>
            <person name="Kleinjan D.J."/>
            <person name="Hoitink C.W."/>
            <person name="Huitema F."/>
            <person name="Beintema J.J."/>
            <person name="Duine J.A."/>
            <person name="Canters G.W."/>
        </authorList>
    </citation>
    <scope>NUCLEOTIDE SEQUENCE [GENOMIC DNA] OF 1-102</scope>
</reference>
<name>MAUJ_PARVE</name>